<protein>
    <recommendedName>
        <fullName evidence="1">Heptaprenylglyceryl phosphate synthase</fullName>
        <shortName evidence="1">HepGP synthase</shortName>
        <ecNumber evidence="1">2.5.1.n9</ecNumber>
    </recommendedName>
    <alternativeName>
        <fullName evidence="1">Glycerol-1-phosphate heptaprenyltransferase</fullName>
    </alternativeName>
</protein>
<name>PCRB_STAAW</name>
<reference key="1">
    <citation type="journal article" date="2002" name="Lancet">
        <title>Genome and virulence determinants of high virulence community-acquired MRSA.</title>
        <authorList>
            <person name="Baba T."/>
            <person name="Takeuchi F."/>
            <person name="Kuroda M."/>
            <person name="Yuzawa H."/>
            <person name="Aoki K."/>
            <person name="Oguchi A."/>
            <person name="Nagai Y."/>
            <person name="Iwama N."/>
            <person name="Asano K."/>
            <person name="Naimi T."/>
            <person name="Kuroda H."/>
            <person name="Cui L."/>
            <person name="Yamamoto K."/>
            <person name="Hiramatsu K."/>
        </authorList>
    </citation>
    <scope>NUCLEOTIDE SEQUENCE [LARGE SCALE GENOMIC DNA]</scope>
    <source>
        <strain>MW2</strain>
    </source>
</reference>
<sequence>MYDIKKWRHIFKLDPAKHISDDDLDAICMSQTDAIMIGGTDDVTEDNVIHLMSRVRRYPLPLVLEISNIESVMPGFDFYFVPTVLNSTDVVFHNGTLLEALKTYGHSIDFEEVIFEGYVVCNADSKVAKHTKANTDLTTEDLEAYAQMVNHMYRLPVMYIEYSGIYGDVSKVQAVSEHLTETQLFYGGGISSEQQATEMAAIADTIIVGDIIYKDIKKALKTVKIKESSK</sequence>
<dbReference type="EC" id="2.5.1.n9" evidence="1"/>
<dbReference type="EMBL" id="BA000033">
    <property type="protein sequence ID" value="BAB95712.1"/>
    <property type="molecule type" value="Genomic_DNA"/>
</dbReference>
<dbReference type="RefSeq" id="WP_000272070.1">
    <property type="nucleotide sequence ID" value="NC_003923.1"/>
</dbReference>
<dbReference type="SMR" id="Q8NVT0"/>
<dbReference type="KEGG" id="sam:MW1847"/>
<dbReference type="HOGENOM" id="CLU_095211_0_0_9"/>
<dbReference type="UniPathway" id="UPA00940"/>
<dbReference type="GO" id="GO:0120536">
    <property type="term" value="F:heptaprenylglyceryl phosphate synthase activity"/>
    <property type="evidence" value="ECO:0007669"/>
    <property type="project" value="RHEA"/>
</dbReference>
<dbReference type="GO" id="GO:0000287">
    <property type="term" value="F:magnesium ion binding"/>
    <property type="evidence" value="ECO:0007669"/>
    <property type="project" value="UniProtKB-UniRule"/>
</dbReference>
<dbReference type="GO" id="GO:0046474">
    <property type="term" value="P:glycerophospholipid biosynthetic process"/>
    <property type="evidence" value="ECO:0007669"/>
    <property type="project" value="UniProtKB-UniRule"/>
</dbReference>
<dbReference type="CDD" id="cd02812">
    <property type="entry name" value="PcrB_like"/>
    <property type="match status" value="1"/>
</dbReference>
<dbReference type="FunFam" id="3.20.20.390:FF:000001">
    <property type="entry name" value="Heptaprenylglyceryl phosphate synthase"/>
    <property type="match status" value="1"/>
</dbReference>
<dbReference type="Gene3D" id="3.20.20.390">
    <property type="entry name" value="FMN-linked oxidoreductases"/>
    <property type="match status" value="1"/>
</dbReference>
<dbReference type="HAMAP" id="MF_00112">
    <property type="entry name" value="GGGP_HepGP_synthase"/>
    <property type="match status" value="1"/>
</dbReference>
<dbReference type="InterPro" id="IPR039074">
    <property type="entry name" value="GGGP/HepGP_synthase_I"/>
</dbReference>
<dbReference type="InterPro" id="IPR038597">
    <property type="entry name" value="GGGP/HepGP_synthase_sf"/>
</dbReference>
<dbReference type="InterPro" id="IPR008205">
    <property type="entry name" value="GGGP_HepGP_synthase"/>
</dbReference>
<dbReference type="NCBIfam" id="TIGR01768">
    <property type="entry name" value="GGGP-family"/>
    <property type="match status" value="1"/>
</dbReference>
<dbReference type="NCBIfam" id="NF003197">
    <property type="entry name" value="PRK04169.1-1"/>
    <property type="match status" value="1"/>
</dbReference>
<dbReference type="NCBIfam" id="NF003199">
    <property type="entry name" value="PRK04169.1-3"/>
    <property type="match status" value="1"/>
</dbReference>
<dbReference type="NCBIfam" id="NF003200">
    <property type="entry name" value="PRK04169.1-4"/>
    <property type="match status" value="1"/>
</dbReference>
<dbReference type="PANTHER" id="PTHR40029">
    <property type="match status" value="1"/>
</dbReference>
<dbReference type="PANTHER" id="PTHR40029:SF2">
    <property type="entry name" value="HEPTAPRENYLGLYCERYL PHOSPHATE SYNTHASE"/>
    <property type="match status" value="1"/>
</dbReference>
<dbReference type="Pfam" id="PF01884">
    <property type="entry name" value="PcrB"/>
    <property type="match status" value="1"/>
</dbReference>
<dbReference type="SUPFAM" id="SSF51395">
    <property type="entry name" value="FMN-linked oxidoreductases"/>
    <property type="match status" value="1"/>
</dbReference>
<proteinExistence type="inferred from homology"/>
<organism>
    <name type="scientific">Staphylococcus aureus (strain MW2)</name>
    <dbReference type="NCBI Taxonomy" id="196620"/>
    <lineage>
        <taxon>Bacteria</taxon>
        <taxon>Bacillati</taxon>
        <taxon>Bacillota</taxon>
        <taxon>Bacilli</taxon>
        <taxon>Bacillales</taxon>
        <taxon>Staphylococcaceae</taxon>
        <taxon>Staphylococcus</taxon>
    </lineage>
</organism>
<keyword id="KW-0444">Lipid biosynthesis</keyword>
<keyword id="KW-0443">Lipid metabolism</keyword>
<keyword id="KW-0460">Magnesium</keyword>
<keyword id="KW-0479">Metal-binding</keyword>
<keyword id="KW-0594">Phospholipid biosynthesis</keyword>
<keyword id="KW-1208">Phospholipid metabolism</keyword>
<keyword id="KW-0808">Transferase</keyword>
<gene>
    <name evidence="1" type="primary">pcrB</name>
    <name type="ordered locus">MW1847</name>
</gene>
<feature type="chain" id="PRO_0000138723" description="Heptaprenylglyceryl phosphate synthase">
    <location>
        <begin position="1"/>
        <end position="230"/>
    </location>
</feature>
<feature type="binding site" evidence="1">
    <location>
        <position position="12"/>
    </location>
    <ligand>
        <name>sn-glycerol 1-phosphate</name>
        <dbReference type="ChEBI" id="CHEBI:57685"/>
    </ligand>
</feature>
<feature type="binding site" evidence="1">
    <location>
        <position position="14"/>
    </location>
    <ligand>
        <name>Mg(2+)</name>
        <dbReference type="ChEBI" id="CHEBI:18420"/>
    </ligand>
</feature>
<feature type="binding site" evidence="1">
    <location>
        <position position="40"/>
    </location>
    <ligand>
        <name>Mg(2+)</name>
        <dbReference type="ChEBI" id="CHEBI:18420"/>
    </ligand>
</feature>
<feature type="binding site" evidence="1">
    <location>
        <begin position="159"/>
        <end position="164"/>
    </location>
    <ligand>
        <name>sn-glycerol 1-phosphate</name>
        <dbReference type="ChEBI" id="CHEBI:57685"/>
    </ligand>
</feature>
<feature type="binding site" evidence="1">
    <location>
        <position position="189"/>
    </location>
    <ligand>
        <name>sn-glycerol 1-phosphate</name>
        <dbReference type="ChEBI" id="CHEBI:57685"/>
    </ligand>
</feature>
<feature type="binding site" evidence="1">
    <location>
        <begin position="209"/>
        <end position="210"/>
    </location>
    <ligand>
        <name>sn-glycerol 1-phosphate</name>
        <dbReference type="ChEBI" id="CHEBI:57685"/>
    </ligand>
</feature>
<accession>Q8NVT0</accession>
<evidence type="ECO:0000255" key="1">
    <source>
        <dbReference type="HAMAP-Rule" id="MF_00112"/>
    </source>
</evidence>
<comment type="function">
    <text evidence="1">Prenyltransferase that catalyzes in vivo the transfer of the heptaprenyl moiety of heptaprenyl pyrophosphate (HepPP; 35 carbon atoms) to the C3 hydroxyl of sn-glycerol-1-phosphate (G1P), producing heptaprenylglyceryl phosphate (HepGP). This reaction is an ether-bond-formation step in the biosynthesis of archaea-type G1P-based membrane lipids found in Bacillales.</text>
</comment>
<comment type="catalytic activity">
    <reaction evidence="1">
        <text>sn-glycerol 1-phosphate + all-trans-heptaprenyl diphosphate = 3-heptaprenyl-sn-glycero-1-phosphate + diphosphate</text>
        <dbReference type="Rhea" id="RHEA:33495"/>
        <dbReference type="ChEBI" id="CHEBI:33019"/>
        <dbReference type="ChEBI" id="CHEBI:57685"/>
        <dbReference type="ChEBI" id="CHEBI:58206"/>
        <dbReference type="ChEBI" id="CHEBI:64781"/>
        <dbReference type="EC" id="2.5.1.n9"/>
    </reaction>
</comment>
<comment type="cofactor">
    <cofactor evidence="1">
        <name>Mg(2+)</name>
        <dbReference type="ChEBI" id="CHEBI:18420"/>
    </cofactor>
</comment>
<comment type="pathway">
    <text evidence="1">Membrane lipid metabolism; glycerophospholipid metabolism.</text>
</comment>
<comment type="subunit">
    <text evidence="1">Homodimer.</text>
</comment>
<comment type="similarity">
    <text evidence="1">Belongs to the GGGP/HepGP synthase family. Group I subfamily.</text>
</comment>